<dbReference type="EMBL" id="AJ133034">
    <property type="protein sequence ID" value="CAB37073.1"/>
    <property type="molecule type" value="Genomic_DNA"/>
</dbReference>
<dbReference type="EMBL" id="AE001363">
    <property type="protein sequence ID" value="AAD18594.1"/>
    <property type="molecule type" value="Genomic_DNA"/>
</dbReference>
<dbReference type="EMBL" id="AE002161">
    <property type="protein sequence ID" value="AAF38158.1"/>
    <property type="molecule type" value="Genomic_DNA"/>
</dbReference>
<dbReference type="EMBL" id="BA000008">
    <property type="protein sequence ID" value="BAA98659.1"/>
    <property type="molecule type" value="Genomic_DNA"/>
</dbReference>
<dbReference type="EMBL" id="AE009440">
    <property type="protein sequence ID" value="AAP98400.1"/>
    <property type="molecule type" value="Genomic_DNA"/>
</dbReference>
<dbReference type="PIR" id="A86547">
    <property type="entry name" value="A86547"/>
</dbReference>
<dbReference type="PIR" id="E72076">
    <property type="entry name" value="E72076"/>
</dbReference>
<dbReference type="RefSeq" id="NP_224650.1">
    <property type="nucleotide sequence ID" value="NC_000922.1"/>
</dbReference>
<dbReference type="RefSeq" id="WP_010883093.1">
    <property type="nucleotide sequence ID" value="NZ_LN847257.1"/>
</dbReference>
<dbReference type="STRING" id="406984.CPK_ORF00966"/>
<dbReference type="GeneID" id="45050498"/>
<dbReference type="KEGG" id="cpa:CP_0301"/>
<dbReference type="KEGG" id="cpj:pmp_12"/>
<dbReference type="KEGG" id="cpn:CPn_0452"/>
<dbReference type="KEGG" id="cpt:CpB0469"/>
<dbReference type="PATRIC" id="fig|115713.3.peg.503"/>
<dbReference type="eggNOG" id="COG4625">
    <property type="taxonomic scope" value="Bacteria"/>
</dbReference>
<dbReference type="HOGENOM" id="CLU_529663_0_0_0"/>
<dbReference type="OrthoDB" id="19125at2"/>
<dbReference type="Proteomes" id="UP000000583">
    <property type="component" value="Chromosome"/>
</dbReference>
<dbReference type="Proteomes" id="UP000000801">
    <property type="component" value="Chromosome"/>
</dbReference>
<dbReference type="GO" id="GO:0009279">
    <property type="term" value="C:cell outer membrane"/>
    <property type="evidence" value="ECO:0007669"/>
    <property type="project" value="UniProtKB-SubCell"/>
</dbReference>
<dbReference type="GO" id="GO:0005576">
    <property type="term" value="C:extracellular region"/>
    <property type="evidence" value="ECO:0007669"/>
    <property type="project" value="UniProtKB-KW"/>
</dbReference>
<dbReference type="InterPro" id="IPR011050">
    <property type="entry name" value="Pectin_lyase_fold/virulence"/>
</dbReference>
<dbReference type="InterPro" id="IPR011427">
    <property type="entry name" value="Polymorphic_membr_middle"/>
</dbReference>
<dbReference type="InterPro" id="IPR003368">
    <property type="entry name" value="POMP_repeat"/>
</dbReference>
<dbReference type="NCBIfam" id="TIGR01376">
    <property type="entry name" value="POMP_repeat"/>
    <property type="match status" value="2"/>
</dbReference>
<dbReference type="Pfam" id="PF02415">
    <property type="entry name" value="Chlam_PMP"/>
    <property type="match status" value="3"/>
</dbReference>
<dbReference type="Pfam" id="PF07548">
    <property type="entry name" value="ChlamPMP_M"/>
    <property type="match status" value="1"/>
</dbReference>
<dbReference type="SUPFAM" id="SSF51126">
    <property type="entry name" value="Pectin lyase-like"/>
    <property type="match status" value="1"/>
</dbReference>
<evidence type="ECO:0000255" key="1"/>
<evidence type="ECO:0000305" key="2"/>
<reference key="1">
    <citation type="journal article" date="1999" name="Am. Heart J.">
        <title>Molecular biology of Chlamydia pneumoniae surface proteins and their role in immunopathogenicity.</title>
        <authorList>
            <person name="Christiansen G."/>
            <person name="Boesen T."/>
            <person name="Hjerno K."/>
            <person name="Daugaard L."/>
            <person name="Mygind P."/>
            <person name="Madsen A.S."/>
            <person name="Knudsen K."/>
            <person name="Falk E."/>
            <person name="Birkelund S."/>
        </authorList>
    </citation>
    <scope>NUCLEOTIDE SEQUENCE [GENOMIC DNA]</scope>
    <source>
        <strain>CWL029 / VR1310</strain>
    </source>
</reference>
<reference key="2">
    <citation type="journal article" date="1999" name="Nat. Genet.">
        <title>Comparative genomes of Chlamydia pneumoniae and C. trachomatis.</title>
        <authorList>
            <person name="Kalman S."/>
            <person name="Mitchell W.P."/>
            <person name="Marathe R."/>
            <person name="Lammel C.J."/>
            <person name="Fan J."/>
            <person name="Hyman R.W."/>
            <person name="Olinger L."/>
            <person name="Grimwood J."/>
            <person name="Davis R.W."/>
            <person name="Stephens R.S."/>
        </authorList>
    </citation>
    <scope>NUCLEOTIDE SEQUENCE [LARGE SCALE GENOMIC DNA]</scope>
    <source>
        <strain>CWL029</strain>
    </source>
</reference>
<reference key="3">
    <citation type="journal article" date="2000" name="Nucleic Acids Res.">
        <title>Genome sequences of Chlamydia trachomatis MoPn and Chlamydia pneumoniae AR39.</title>
        <authorList>
            <person name="Read T.D."/>
            <person name="Brunham R.C."/>
            <person name="Shen C."/>
            <person name="Gill S.R."/>
            <person name="Heidelberg J.F."/>
            <person name="White O."/>
            <person name="Hickey E.K."/>
            <person name="Peterson J.D."/>
            <person name="Utterback T.R."/>
            <person name="Berry K.J."/>
            <person name="Bass S."/>
            <person name="Linher K.D."/>
            <person name="Weidman J.F."/>
            <person name="Khouri H.M."/>
            <person name="Craven B."/>
            <person name="Bowman C."/>
            <person name="Dodson R.J."/>
            <person name="Gwinn M.L."/>
            <person name="Nelson W.C."/>
            <person name="DeBoy R.T."/>
            <person name="Kolonay J.F."/>
            <person name="McClarty G."/>
            <person name="Salzberg S.L."/>
            <person name="Eisen J.A."/>
            <person name="Fraser C.M."/>
        </authorList>
    </citation>
    <scope>NUCLEOTIDE SEQUENCE [LARGE SCALE GENOMIC DNA]</scope>
    <source>
        <strain>AR39</strain>
    </source>
</reference>
<reference key="4">
    <citation type="journal article" date="2000" name="Nucleic Acids Res.">
        <title>Comparison of whole genome sequences of Chlamydia pneumoniae J138 from Japan and CWL029 from USA.</title>
        <authorList>
            <person name="Shirai M."/>
            <person name="Hirakawa H."/>
            <person name="Kimoto M."/>
            <person name="Tabuchi M."/>
            <person name="Kishi F."/>
            <person name="Ouchi K."/>
            <person name="Shiba T."/>
            <person name="Ishii K."/>
            <person name="Hattori M."/>
            <person name="Kuhara S."/>
            <person name="Nakazawa T."/>
        </authorList>
    </citation>
    <scope>NUCLEOTIDE SEQUENCE [LARGE SCALE GENOMIC DNA]</scope>
    <source>
        <strain>J138</strain>
    </source>
</reference>
<reference key="5">
    <citation type="submission" date="2002-05" db="EMBL/GenBank/DDBJ databases">
        <title>The genome sequence of Chlamydia pneumoniae TW183 and comparison with other Chlamydia strains based on whole genome sequence analysis.</title>
        <authorList>
            <person name="Geng M.M."/>
            <person name="Schuhmacher A."/>
            <person name="Muehldorfer I."/>
            <person name="Bensch K.W."/>
            <person name="Schaefer K.P."/>
            <person name="Schneider S."/>
            <person name="Pohl T."/>
            <person name="Essig A."/>
            <person name="Marre R."/>
            <person name="Melchers K."/>
        </authorList>
    </citation>
    <scope>NUCLEOTIDE SEQUENCE [LARGE SCALE GENOMIC DNA]</scope>
    <source>
        <strain>TW-183</strain>
    </source>
</reference>
<keyword id="KW-0998">Cell outer membrane</keyword>
<keyword id="KW-0134">Cell wall</keyword>
<keyword id="KW-0472">Membrane</keyword>
<keyword id="KW-0964">Secreted</keyword>
<keyword id="KW-0732">Signal</keyword>
<organism>
    <name type="scientific">Chlamydia pneumoniae</name>
    <name type="common">Chlamydophila pneumoniae</name>
    <dbReference type="NCBI Taxonomy" id="83558"/>
    <lineage>
        <taxon>Bacteria</taxon>
        <taxon>Pseudomonadati</taxon>
        <taxon>Chlamydiota</taxon>
        <taxon>Chlamydiia</taxon>
        <taxon>Chlamydiales</taxon>
        <taxon>Chlamydiaceae</taxon>
        <taxon>Chlamydia/Chlamydophila group</taxon>
        <taxon>Chlamydia</taxon>
    </lineage>
</organism>
<name>PMP12_CHLPN</name>
<accession>Q9Z3D6</accession>
<protein>
    <recommendedName>
        <fullName>Probable outer membrane protein pmp12</fullName>
    </recommendedName>
    <alternativeName>
        <fullName>Outer membrane protein 13</fullName>
    </alternativeName>
    <alternativeName>
        <fullName>Polymorphic membrane protein 12</fullName>
    </alternativeName>
</protein>
<feature type="signal peptide" evidence="1">
    <location>
        <begin position="1"/>
        <end position="21"/>
    </location>
</feature>
<feature type="chain" id="PRO_0000024742" description="Probable outer membrane protein pmp12">
    <location>
        <begin position="22"/>
        <end position="514"/>
    </location>
</feature>
<comment type="subcellular location">
    <subcellularLocation>
        <location>Secreted</location>
        <location>Cell wall</location>
    </subcellularLocation>
    <subcellularLocation>
        <location evidence="2">Cell outer membrane</location>
        <topology evidence="2">Peripheral membrane protein</topology>
        <orientation evidence="2">Extracellular side</orientation>
    </subcellularLocation>
</comment>
<comment type="developmental stage">
    <text>Elementary body.</text>
</comment>
<comment type="similarity">
    <text evidence="2">Belongs to the PMP outer membrane protein family.</text>
</comment>
<sequence length="514" mass="56096">MTILRNFLTCSALFLALPAAAQVVYLHESDGYNGAINNKSLEPKITCYPEGTSYIFLDDVRISNVKHDQEDAGVFINRSGNLFFMGNRCNFTFHNLMTEGFGAAISNRVGDTTLTLSNFSYLAFTSAPLLPQGQGAIYSLGSVMIENSEEVTFCGNYSSWSGAAIYTPYLLGSKASRPSVNLSGNRYLVFRDNVSQGYGGAISTHNLTLTTRGPSCFENNHAYHDVNSNGGAIAIAPGGSISISVKSGDLIFKGNTASQDGNTIHNSIHLQSGAQFKNLRAVSESGVYFYDPISHSESHKITDLVINAPEGKETYEGTISFSGLCLDDHEVCAENLTSTILQDVTLAGGTLSLSDGVTLQLHSFKQEASSTLTMSPGTTLLCSGDARVQNLHILIEDTDNFVPVRIRAEDKDALVSLEKLKVAFEAYWSVYDFPQFKEAFTIPLLELLGPSFDSLLLGETTLERTQVTTENDAVRGFWSLSWEEYPPSLDKDRRITPTKKTVFLTWNPEITSTP</sequence>
<proteinExistence type="evidence at transcript level"/>
<gene>
    <name type="primary">pmp12</name>
    <name type="synonym">omp13</name>
    <name type="ordered locus">CPn_0452</name>
    <name type="ordered locus">CP_0301</name>
    <name type="ordered locus">CpB0469</name>
</gene>